<name>EMP1_MOUSE</name>
<feature type="chain" id="PRO_0000164654" description="Epithelial membrane protein 1">
    <location>
        <begin position="1"/>
        <end position="160"/>
    </location>
</feature>
<feature type="transmembrane region" description="Helical" evidence="1">
    <location>
        <begin position="1"/>
        <end position="21"/>
    </location>
</feature>
<feature type="transmembrane region" description="Helical" evidence="1">
    <location>
        <begin position="67"/>
        <end position="87"/>
    </location>
</feature>
<feature type="transmembrane region" description="Helical" evidence="1">
    <location>
        <begin position="95"/>
        <end position="115"/>
    </location>
</feature>
<feature type="transmembrane region" description="Helical" evidence="1">
    <location>
        <begin position="137"/>
        <end position="157"/>
    </location>
</feature>
<feature type="glycosylation site" description="N-linked (GlcNAc...) asparagine" evidence="2">
    <location>
        <position position="35"/>
    </location>
</feature>
<feature type="glycosylation site" description="N-linked (GlcNAc...) asparagine" evidence="1">
    <location>
        <position position="43"/>
    </location>
</feature>
<feature type="glycosylation site" description="N-linked (GlcNAc...) asparagine" evidence="1">
    <location>
        <position position="128"/>
    </location>
</feature>
<proteinExistence type="evidence at protein level"/>
<protein>
    <recommendedName>
        <fullName>Epithelial membrane protein 1</fullName>
        <shortName>EMP-1</shortName>
    </recommendedName>
    <alternativeName>
        <fullName>Tumor-associated membrane protein</fullName>
    </alternativeName>
</protein>
<accession>P47801</accession>
<gene>
    <name type="primary">Emp1</name>
    <name type="synonym">Tmp</name>
</gene>
<dbReference type="EMBL" id="U25633">
    <property type="protein sequence ID" value="AAC52968.1"/>
    <property type="molecule type" value="mRNA"/>
</dbReference>
<dbReference type="EMBL" id="X98403">
    <property type="protein sequence ID" value="CAA67053.1"/>
    <property type="molecule type" value="mRNA"/>
</dbReference>
<dbReference type="EMBL" id="X98471">
    <property type="protein sequence ID" value="CAA67106.1"/>
    <property type="molecule type" value="Genomic_DNA"/>
</dbReference>
<dbReference type="EMBL" id="BC046299">
    <property type="protein sequence ID" value="AAH46299.1"/>
    <property type="molecule type" value="mRNA"/>
</dbReference>
<dbReference type="EMBL" id="BC050899">
    <property type="protein sequence ID" value="AAH50899.1"/>
    <property type="molecule type" value="mRNA"/>
</dbReference>
<dbReference type="CCDS" id="CCDS20647.1"/>
<dbReference type="PIR" id="JC5730">
    <property type="entry name" value="JC5730"/>
</dbReference>
<dbReference type="RefSeq" id="NP_001275556.1">
    <property type="nucleotide sequence ID" value="NM_001288627.1"/>
</dbReference>
<dbReference type="RefSeq" id="NP_001275557.1">
    <property type="nucleotide sequence ID" value="NM_001288628.1"/>
</dbReference>
<dbReference type="RefSeq" id="NP_034258.1">
    <property type="nucleotide sequence ID" value="NM_010128.4"/>
</dbReference>
<dbReference type="RefSeq" id="XP_006505565.1">
    <property type="nucleotide sequence ID" value="XM_006505502.1"/>
</dbReference>
<dbReference type="SMR" id="P47801"/>
<dbReference type="BioGRID" id="199438">
    <property type="interactions" value="1"/>
</dbReference>
<dbReference type="FunCoup" id="P47801">
    <property type="interactions" value="959"/>
</dbReference>
<dbReference type="IntAct" id="P47801">
    <property type="interactions" value="1"/>
</dbReference>
<dbReference type="STRING" id="10090.ENSMUSP00000145069"/>
<dbReference type="GlyCosmos" id="P47801">
    <property type="glycosylation" value="3 sites, No reported glycans"/>
</dbReference>
<dbReference type="GlyGen" id="P47801">
    <property type="glycosylation" value="3 sites, 1 N-linked glycan (1 site)"/>
</dbReference>
<dbReference type="iPTMnet" id="P47801"/>
<dbReference type="PhosphoSitePlus" id="P47801"/>
<dbReference type="PaxDb" id="10090-ENSMUSP00000107538"/>
<dbReference type="PeptideAtlas" id="P47801"/>
<dbReference type="ProteomicsDB" id="277861"/>
<dbReference type="Pumba" id="P47801"/>
<dbReference type="Antibodypedia" id="23604">
    <property type="antibodies" value="106 antibodies from 20 providers"/>
</dbReference>
<dbReference type="DNASU" id="13730"/>
<dbReference type="Ensembl" id="ENSMUST00000032330.16">
    <property type="protein sequence ID" value="ENSMUSP00000032330.10"/>
    <property type="gene ID" value="ENSMUSG00000030208.16"/>
</dbReference>
<dbReference type="Ensembl" id="ENSMUST00000111907.2">
    <property type="protein sequence ID" value="ENSMUSP00000107538.2"/>
    <property type="gene ID" value="ENSMUSG00000030208.16"/>
</dbReference>
<dbReference type="Ensembl" id="ENSMUST00000205156.3">
    <property type="protein sequence ID" value="ENSMUSP00000145069.2"/>
    <property type="gene ID" value="ENSMUSG00000030208.16"/>
</dbReference>
<dbReference type="GeneID" id="13730"/>
<dbReference type="KEGG" id="mmu:13730"/>
<dbReference type="UCSC" id="uc009elo.1">
    <property type="organism name" value="mouse"/>
</dbReference>
<dbReference type="AGR" id="MGI:107941"/>
<dbReference type="CTD" id="2012"/>
<dbReference type="MGI" id="MGI:107941">
    <property type="gene designation" value="Emp1"/>
</dbReference>
<dbReference type="VEuPathDB" id="HostDB:ENSMUSG00000030208"/>
<dbReference type="eggNOG" id="ENOG502S028">
    <property type="taxonomic scope" value="Eukaryota"/>
</dbReference>
<dbReference type="GeneTree" id="ENSGT00950000182696"/>
<dbReference type="HOGENOM" id="CLU_138632_0_1_1"/>
<dbReference type="InParanoid" id="P47801"/>
<dbReference type="OMA" id="CWMCILI"/>
<dbReference type="OrthoDB" id="8678517at2759"/>
<dbReference type="PhylomeDB" id="P47801"/>
<dbReference type="TreeFam" id="TF330414"/>
<dbReference type="BioGRID-ORCS" id="13730">
    <property type="hits" value="2 hits in 76 CRISPR screens"/>
</dbReference>
<dbReference type="ChiTaRS" id="Emp1">
    <property type="organism name" value="mouse"/>
</dbReference>
<dbReference type="PRO" id="PR:P47801"/>
<dbReference type="Proteomes" id="UP000000589">
    <property type="component" value="Chromosome 6"/>
</dbReference>
<dbReference type="RNAct" id="P47801">
    <property type="molecule type" value="protein"/>
</dbReference>
<dbReference type="Bgee" id="ENSMUSG00000030208">
    <property type="expression patterns" value="Expressed in substantia propria of cornea and 207 other cell types or tissues"/>
</dbReference>
<dbReference type="ExpressionAtlas" id="P47801">
    <property type="expression patterns" value="baseline and differential"/>
</dbReference>
<dbReference type="GO" id="GO:0005886">
    <property type="term" value="C:plasma membrane"/>
    <property type="evidence" value="ECO:0007669"/>
    <property type="project" value="Ensembl"/>
</dbReference>
<dbReference type="GO" id="GO:0006915">
    <property type="term" value="P:apoptotic process"/>
    <property type="evidence" value="ECO:0007669"/>
    <property type="project" value="Ensembl"/>
</dbReference>
<dbReference type="GO" id="GO:0032060">
    <property type="term" value="P:bleb assembly"/>
    <property type="evidence" value="ECO:0007669"/>
    <property type="project" value="Ensembl"/>
</dbReference>
<dbReference type="FunFam" id="1.20.140.150:FF:000026">
    <property type="entry name" value="Epithelial membrane protein 1"/>
    <property type="match status" value="1"/>
</dbReference>
<dbReference type="Gene3D" id="1.20.140.150">
    <property type="match status" value="1"/>
</dbReference>
<dbReference type="InterPro" id="IPR003932">
    <property type="entry name" value="EMP_1"/>
</dbReference>
<dbReference type="InterPro" id="IPR050579">
    <property type="entry name" value="PMP-22/EMP/MP20-like"/>
</dbReference>
<dbReference type="InterPro" id="IPR004031">
    <property type="entry name" value="PMP22/EMP/MP20/Claudin"/>
</dbReference>
<dbReference type="InterPro" id="IPR004032">
    <property type="entry name" value="PMP22_EMP_MP20"/>
</dbReference>
<dbReference type="PANTHER" id="PTHR10671:SF6">
    <property type="entry name" value="EPITHELIAL MEMBRANE PROTEIN 1"/>
    <property type="match status" value="1"/>
</dbReference>
<dbReference type="PANTHER" id="PTHR10671">
    <property type="entry name" value="EPITHELIAL MEMBRANE PROTEIN-RELATED"/>
    <property type="match status" value="1"/>
</dbReference>
<dbReference type="Pfam" id="PF00822">
    <property type="entry name" value="PMP22_Claudin"/>
    <property type="match status" value="1"/>
</dbReference>
<dbReference type="PRINTS" id="PR01453">
    <property type="entry name" value="EPMEMFAMILY"/>
</dbReference>
<dbReference type="PRINTS" id="PR01454">
    <property type="entry name" value="EPMEMPROT1"/>
</dbReference>
<dbReference type="PROSITE" id="PS01221">
    <property type="entry name" value="PMP22_1"/>
    <property type="match status" value="1"/>
</dbReference>
<dbReference type="PROSITE" id="PS01222">
    <property type="entry name" value="PMP22_2"/>
    <property type="match status" value="1"/>
</dbReference>
<organism>
    <name type="scientific">Mus musculus</name>
    <name type="common">Mouse</name>
    <dbReference type="NCBI Taxonomy" id="10090"/>
    <lineage>
        <taxon>Eukaryota</taxon>
        <taxon>Metazoa</taxon>
        <taxon>Chordata</taxon>
        <taxon>Craniata</taxon>
        <taxon>Vertebrata</taxon>
        <taxon>Euteleostomi</taxon>
        <taxon>Mammalia</taxon>
        <taxon>Eutheria</taxon>
        <taxon>Euarchontoglires</taxon>
        <taxon>Glires</taxon>
        <taxon>Rodentia</taxon>
        <taxon>Myomorpha</taxon>
        <taxon>Muroidea</taxon>
        <taxon>Muridae</taxon>
        <taxon>Murinae</taxon>
        <taxon>Mus</taxon>
        <taxon>Mus</taxon>
    </lineage>
</organism>
<comment type="subcellular location">
    <subcellularLocation>
        <location>Membrane</location>
        <topology>Multi-pass membrane protein</topology>
    </subcellularLocation>
</comment>
<comment type="similarity">
    <text evidence="3">Belongs to the PMP-22/EMP/MP20 family.</text>
</comment>
<sequence>MLVLLAGLFVVHIATAIMLFVSTIANVWMVADYANASVGLWKNCTGGNCDGSLSYGNEDAIKAVQAFMILSIIFSIISLVVFVFQLFTMEKGNRFFLSGSTMLVCWLCILVGVSIYTHHYAHSEGNFNSSSHQGYCFILTWICFCFSFIIGILYMVLRKK</sequence>
<reference key="1">
    <citation type="journal article" date="1996" name="Gene">
        <title>Characterization of a tumor-associated gene, a member of a novel family of genes encoding membrane glycoproteins.</title>
        <authorList>
            <person name="Ben-Porath I."/>
            <person name="Benvenisty N."/>
        </authorList>
    </citation>
    <scope>NUCLEOTIDE SEQUENCE [MRNA]</scope>
    <source>
        <tissue>Brain tumor</tissue>
    </source>
</reference>
<reference key="2">
    <citation type="journal article" date="1996" name="Genomics">
        <title>Identification and characterization of a cDNA and the structural gene encoding the mouse epithelial membrane protein-1.</title>
        <authorList>
            <person name="Lobsiger C."/>
            <person name="Magyar J.P."/>
            <person name="Taylor V."/>
            <person name="Wulf P."/>
            <person name="Welcher A.A."/>
            <person name="Suter U."/>
        </authorList>
    </citation>
    <scope>NUCLEOTIDE SEQUENCE [MRNA]</scope>
    <source>
        <strain>129/Sv</strain>
        <strain>BDF1</strain>
        <tissue>Intestine</tissue>
    </source>
</reference>
<reference key="3">
    <citation type="journal article" date="2004" name="Genome Res.">
        <title>The status, quality, and expansion of the NIH full-length cDNA project: the Mammalian Gene Collection (MGC).</title>
        <authorList>
            <consortium name="The MGC Project Team"/>
        </authorList>
    </citation>
    <scope>NUCLEOTIDE SEQUENCE [LARGE SCALE MRNA]</scope>
    <source>
        <strain>C57BL/6J</strain>
        <tissue>Brain</tissue>
        <tissue>Mammary gland</tissue>
    </source>
</reference>
<reference key="4">
    <citation type="journal article" date="2009" name="Mol. Cell. Proteomics">
        <title>The mouse C2C12 myoblast cell surface N-linked glycoproteome: identification, glycosite occupancy, and membrane orientation.</title>
        <authorList>
            <person name="Gundry R.L."/>
            <person name="Raginski K."/>
            <person name="Tarasova Y."/>
            <person name="Tchernyshyov I."/>
            <person name="Bausch-Fluck D."/>
            <person name="Elliott S.T."/>
            <person name="Boheler K.R."/>
            <person name="Van Eyk J.E."/>
            <person name="Wollscheid B."/>
        </authorList>
    </citation>
    <scope>GLYCOSYLATION [LARGE SCALE ANALYSIS] AT ASN-35</scope>
    <source>
        <tissue>Myoblast</tissue>
    </source>
</reference>
<keyword id="KW-0325">Glycoprotein</keyword>
<keyword id="KW-0472">Membrane</keyword>
<keyword id="KW-1185">Reference proteome</keyword>
<keyword id="KW-0812">Transmembrane</keyword>
<keyword id="KW-1133">Transmembrane helix</keyword>
<evidence type="ECO:0000255" key="1"/>
<evidence type="ECO:0000269" key="2">
    <source>
    </source>
</evidence>
<evidence type="ECO:0000305" key="3"/>